<accession>Q6Z8P4</accession>
<accession>Q0J4I7</accession>
<name>PIRL4_ORYSJ</name>
<organism>
    <name type="scientific">Oryza sativa subsp. japonica</name>
    <name type="common">Rice</name>
    <dbReference type="NCBI Taxonomy" id="39947"/>
    <lineage>
        <taxon>Eukaryota</taxon>
        <taxon>Viridiplantae</taxon>
        <taxon>Streptophyta</taxon>
        <taxon>Embryophyta</taxon>
        <taxon>Tracheophyta</taxon>
        <taxon>Spermatophyta</taxon>
        <taxon>Magnoliopsida</taxon>
        <taxon>Liliopsida</taxon>
        <taxon>Poales</taxon>
        <taxon>Poaceae</taxon>
        <taxon>BOP clade</taxon>
        <taxon>Oryzoideae</taxon>
        <taxon>Oryzeae</taxon>
        <taxon>Oryzinae</taxon>
        <taxon>Oryza</taxon>
        <taxon>Oryza sativa</taxon>
    </lineage>
</organism>
<reference key="1">
    <citation type="journal article" date="2005" name="Nature">
        <title>The map-based sequence of the rice genome.</title>
        <authorList>
            <consortium name="International rice genome sequencing project (IRGSP)"/>
        </authorList>
    </citation>
    <scope>NUCLEOTIDE SEQUENCE [LARGE SCALE GENOMIC DNA]</scope>
    <source>
        <strain>cv. Nipponbare</strain>
    </source>
</reference>
<reference key="2">
    <citation type="journal article" date="2008" name="Nucleic Acids Res.">
        <title>The rice annotation project database (RAP-DB): 2008 update.</title>
        <authorList>
            <consortium name="The rice annotation project (RAP)"/>
        </authorList>
    </citation>
    <scope>GENOME REANNOTATION</scope>
    <source>
        <strain>cv. Nipponbare</strain>
    </source>
</reference>
<reference key="3">
    <citation type="journal article" date="2013" name="Rice">
        <title>Improvement of the Oryza sativa Nipponbare reference genome using next generation sequence and optical map data.</title>
        <authorList>
            <person name="Kawahara Y."/>
            <person name="de la Bastide M."/>
            <person name="Hamilton J.P."/>
            <person name="Kanamori H."/>
            <person name="McCombie W.R."/>
            <person name="Ouyang S."/>
            <person name="Schwartz D.C."/>
            <person name="Tanaka T."/>
            <person name="Wu J."/>
            <person name="Zhou S."/>
            <person name="Childs K.L."/>
            <person name="Davidson R.M."/>
            <person name="Lin H."/>
            <person name="Quesada-Ocampo L."/>
            <person name="Vaillancourt B."/>
            <person name="Sakai H."/>
            <person name="Lee S.S."/>
            <person name="Kim J."/>
            <person name="Numa H."/>
            <person name="Itoh T."/>
            <person name="Buell C.R."/>
            <person name="Matsumoto T."/>
        </authorList>
    </citation>
    <scope>GENOME REANNOTATION</scope>
    <source>
        <strain>cv. Nipponbare</strain>
    </source>
</reference>
<reference key="4">
    <citation type="journal article" date="2010" name="Plant Mol. Biol.">
        <title>Molecular characterization, expression pattern, and functional analysis of the OsIRL gene family encoding intracellular Ras-group-related LRR proteins in rice.</title>
        <authorList>
            <person name="You C."/>
            <person name="Dai X."/>
            <person name="Li X."/>
            <person name="Wang L."/>
            <person name="Chen G."/>
            <person name="Xiao J."/>
            <person name="Wu C."/>
        </authorList>
    </citation>
    <scope>GENE FAMILY</scope>
    <scope>MOTIF GVYW</scope>
    <scope>TISSUE SPECIFICITY</scope>
    <scope>INDUCTION BY LIGHT</scope>
</reference>
<protein>
    <recommendedName>
        <fullName>Plant intracellular Ras-group-related LRR protein 4</fullName>
    </recommendedName>
    <alternativeName>
        <fullName>Intracellular Ras-group-related LRR protein 4</fullName>
        <shortName>OsIRL4</shortName>
    </alternativeName>
</protein>
<feature type="chain" id="PRO_0000423613" description="Plant intracellular Ras-group-related LRR protein 4">
    <location>
        <begin position="1"/>
        <end position="576"/>
    </location>
</feature>
<feature type="repeat" description="LRR 1">
    <location>
        <begin position="272"/>
        <end position="295"/>
    </location>
</feature>
<feature type="repeat" description="LRR 2">
    <location>
        <begin position="296"/>
        <end position="318"/>
    </location>
</feature>
<feature type="repeat" description="LRR 3">
    <location>
        <begin position="320"/>
        <end position="341"/>
    </location>
</feature>
<feature type="repeat" description="LRR 4">
    <location>
        <begin position="342"/>
        <end position="364"/>
    </location>
</feature>
<feature type="repeat" description="LRR 5">
    <location>
        <begin position="366"/>
        <end position="387"/>
    </location>
</feature>
<feature type="repeat" description="LRR 6">
    <location>
        <begin position="389"/>
        <end position="410"/>
    </location>
</feature>
<feature type="repeat" description="LRR 7">
    <location>
        <begin position="411"/>
        <end position="433"/>
    </location>
</feature>
<feature type="repeat" description="LRR 8">
    <location>
        <begin position="434"/>
        <end position="456"/>
    </location>
</feature>
<feature type="repeat" description="LRR 9">
    <location>
        <begin position="458"/>
        <end position="481"/>
    </location>
</feature>
<feature type="repeat" description="LRR 10">
    <location>
        <begin position="482"/>
        <end position="503"/>
    </location>
</feature>
<feature type="repeat" description="LRR 11">
    <location>
        <begin position="505"/>
        <end position="527"/>
    </location>
</feature>
<feature type="region of interest" description="Disordered" evidence="2">
    <location>
        <begin position="130"/>
        <end position="181"/>
    </location>
</feature>
<feature type="short sequence motif" description="GVYW; degenerate">
    <location>
        <begin position="528"/>
        <end position="535"/>
    </location>
</feature>
<feature type="compositionally biased region" description="Low complexity" evidence="2">
    <location>
        <begin position="130"/>
        <end position="151"/>
    </location>
</feature>
<feature type="compositionally biased region" description="Polar residues" evidence="2">
    <location>
        <begin position="160"/>
        <end position="180"/>
    </location>
</feature>
<evidence type="ECO:0000250" key="1"/>
<evidence type="ECO:0000256" key="2">
    <source>
        <dbReference type="SAM" id="MobiDB-lite"/>
    </source>
</evidence>
<evidence type="ECO:0000269" key="3">
    <source>
    </source>
</evidence>
<evidence type="ECO:0000305" key="4"/>
<proteinExistence type="evidence at transcript level"/>
<sequence length="576" mass="62343">MGAVGVEAGVFDTVDGLVGEVMRLHRSLPARPAVEEVEAAEALAAAADREERARADAVARLRRSPAVPDELLCVAQEMHRALAGFQCREQKRDAARLLELEALHTLFDDLIQRASQCLPSTSTRAAPRIAAPAAATTTTSTAAAGSSSSSAVGNAERHASSGTNGFTASRVAGTSTSTGRVSMDDSYVRKAKAAMWDGGAAATNSHLPRGPVEANSVAVRADGNYGDDNEKLSLIKLASMIEVSAKKGARDLNLQGKLMAQIEWLPDSIGKLTGLVTLDISENRLLALPDAIGKLFSLAKLDIHANRISQLPESIGDLRSLIYLNMRGNQLSSLPSSIGRLLNLEELDVGSNGLSSLPDSIGSLTRLKKLIVETNDLDELPYTIGHCVSLVELQAGYNHLKALPEAVGKLEPLEILSVRYNNLRSLPTTMASLTKLKEVDVSFNELESIPENFCFATSLIKLNVGNNFADLQYLPRSIGNLEMLEELDMSNNQIRVLPDSFGNLKHLRVLRAEENPLQVPPRDIALKGAQAVVQYMSDASKRTTKSEPMKPKKTWVHFCFFSRPNKRKHDRIDNAT</sequence>
<comment type="function">
    <text evidence="1">Leucine-rich repeat protein that likely mediates protein interactions, possibly in the context of signal transduction.</text>
</comment>
<comment type="tissue specificity">
    <text evidence="3">Widely expressed.</text>
</comment>
<comment type="induction">
    <text evidence="3">By light.</text>
</comment>
<comment type="similarity">
    <text evidence="4">Belongs to the SHOC2 family.</text>
</comment>
<comment type="sequence caution" evidence="4">
    <conflict type="erroneous gene model prediction">
        <sequence resource="EMBL-CDS" id="BAF24128"/>
    </conflict>
</comment>
<dbReference type="EMBL" id="AP004765">
    <property type="protein sequence ID" value="BAD10056.1"/>
    <property type="molecule type" value="Genomic_DNA"/>
</dbReference>
<dbReference type="EMBL" id="AP008214">
    <property type="protein sequence ID" value="BAF24128.2"/>
    <property type="status" value="ALT_SEQ"/>
    <property type="molecule type" value="Genomic_DNA"/>
</dbReference>
<dbReference type="EMBL" id="AP014964">
    <property type="status" value="NOT_ANNOTATED_CDS"/>
    <property type="molecule type" value="Genomic_DNA"/>
</dbReference>
<dbReference type="RefSeq" id="XP_015650936.1">
    <property type="nucleotide sequence ID" value="XM_015795450.1"/>
</dbReference>
<dbReference type="SMR" id="Q6Z8P4"/>
<dbReference type="FunCoup" id="Q6Z8P4">
    <property type="interactions" value="1505"/>
</dbReference>
<dbReference type="STRING" id="39947.Q6Z8P4"/>
<dbReference type="PaxDb" id="39947-Q6Z8P4"/>
<dbReference type="KEGG" id="dosa:Os08g0511700"/>
<dbReference type="eggNOG" id="KOG0619">
    <property type="taxonomic scope" value="Eukaryota"/>
</dbReference>
<dbReference type="HOGENOM" id="CLU_038753_0_0_1"/>
<dbReference type="InParanoid" id="Q6Z8P4"/>
<dbReference type="OrthoDB" id="1668230at2759"/>
<dbReference type="Proteomes" id="UP000000763">
    <property type="component" value="Chromosome 8"/>
</dbReference>
<dbReference type="Proteomes" id="UP000059680">
    <property type="component" value="Chromosome 8"/>
</dbReference>
<dbReference type="GO" id="GO:0035556">
    <property type="term" value="P:intracellular signal transduction"/>
    <property type="evidence" value="ECO:0000318"/>
    <property type="project" value="GO_Central"/>
</dbReference>
<dbReference type="GO" id="GO:0009416">
    <property type="term" value="P:response to light stimulus"/>
    <property type="evidence" value="ECO:0000270"/>
    <property type="project" value="UniProtKB"/>
</dbReference>
<dbReference type="FunFam" id="3.80.10.10:FF:000405">
    <property type="entry name" value="Plant intracellular Ras-group-related LRR protein 4"/>
    <property type="match status" value="1"/>
</dbReference>
<dbReference type="Gene3D" id="3.80.10.10">
    <property type="entry name" value="Ribonuclease Inhibitor"/>
    <property type="match status" value="1"/>
</dbReference>
<dbReference type="InterPro" id="IPR001611">
    <property type="entry name" value="Leu-rich_rpt"/>
</dbReference>
<dbReference type="InterPro" id="IPR003591">
    <property type="entry name" value="Leu-rich_rpt_typical-subtyp"/>
</dbReference>
<dbReference type="InterPro" id="IPR032675">
    <property type="entry name" value="LRR_dom_sf"/>
</dbReference>
<dbReference type="InterPro" id="IPR050216">
    <property type="entry name" value="LRR_domain-containing"/>
</dbReference>
<dbReference type="InterPro" id="IPR055414">
    <property type="entry name" value="LRR_R13L4/SHOC2-like"/>
</dbReference>
<dbReference type="PANTHER" id="PTHR48051">
    <property type="match status" value="1"/>
</dbReference>
<dbReference type="PANTHER" id="PTHR48051:SF54">
    <property type="entry name" value="LEUCINE-RICH REPEAT-CONTAINING PROTEIN"/>
    <property type="match status" value="1"/>
</dbReference>
<dbReference type="Pfam" id="PF00560">
    <property type="entry name" value="LRR_1"/>
    <property type="match status" value="1"/>
</dbReference>
<dbReference type="Pfam" id="PF23598">
    <property type="entry name" value="LRR_14"/>
    <property type="match status" value="1"/>
</dbReference>
<dbReference type="SMART" id="SM00364">
    <property type="entry name" value="LRR_BAC"/>
    <property type="match status" value="10"/>
</dbReference>
<dbReference type="SMART" id="SM00369">
    <property type="entry name" value="LRR_TYP"/>
    <property type="match status" value="8"/>
</dbReference>
<dbReference type="SUPFAM" id="SSF52058">
    <property type="entry name" value="L domain-like"/>
    <property type="match status" value="1"/>
</dbReference>
<dbReference type="PROSITE" id="PS51450">
    <property type="entry name" value="LRR"/>
    <property type="match status" value="10"/>
</dbReference>
<keyword id="KW-0433">Leucine-rich repeat</keyword>
<keyword id="KW-1185">Reference proteome</keyword>
<keyword id="KW-0677">Repeat</keyword>
<gene>
    <name type="primary">IRL4</name>
    <name type="ordered locus">Os08g0511700</name>
    <name type="ordered locus">LOC_Os08g40090</name>
    <name type="ORF">P0711H09.3</name>
</gene>